<protein>
    <recommendedName>
        <fullName>Cell death protein hid</fullName>
    </recommendedName>
    <alternativeName>
        <fullName>Protein head involution defective</fullName>
    </alternativeName>
    <alternativeName>
        <fullName>Protein wrinkled</fullName>
    </alternativeName>
</protein>
<feature type="chain" id="PRO_0000083972" description="Cell death protein hid">
    <location>
        <begin position="1"/>
        <end position="410"/>
    </location>
</feature>
<feature type="region of interest" description="Disordered" evidence="1">
    <location>
        <begin position="1"/>
        <end position="88"/>
    </location>
</feature>
<feature type="region of interest" description="Disordered" evidence="1">
    <location>
        <begin position="126"/>
        <end position="207"/>
    </location>
</feature>
<feature type="region of interest" description="Disordered" evidence="1">
    <location>
        <begin position="230"/>
        <end position="301"/>
    </location>
</feature>
<feature type="region of interest" description="Disordered" evidence="1">
    <location>
        <begin position="319"/>
        <end position="386"/>
    </location>
</feature>
<feature type="compositionally biased region" description="Low complexity" evidence="1">
    <location>
        <begin position="13"/>
        <end position="27"/>
    </location>
</feature>
<feature type="compositionally biased region" description="Low complexity" evidence="1">
    <location>
        <begin position="35"/>
        <end position="70"/>
    </location>
</feature>
<feature type="compositionally biased region" description="Polar residues" evidence="1">
    <location>
        <begin position="71"/>
        <end position="88"/>
    </location>
</feature>
<feature type="compositionally biased region" description="Low complexity" evidence="1">
    <location>
        <begin position="134"/>
        <end position="145"/>
    </location>
</feature>
<feature type="compositionally biased region" description="Polar residues" evidence="1">
    <location>
        <begin position="149"/>
        <end position="159"/>
    </location>
</feature>
<feature type="compositionally biased region" description="Pro residues" evidence="1">
    <location>
        <begin position="170"/>
        <end position="189"/>
    </location>
</feature>
<feature type="compositionally biased region" description="Low complexity" evidence="1">
    <location>
        <begin position="230"/>
        <end position="242"/>
    </location>
</feature>
<feature type="compositionally biased region" description="Basic and acidic residues" evidence="1">
    <location>
        <begin position="292"/>
        <end position="301"/>
    </location>
</feature>
<feature type="compositionally biased region" description="Polar residues" evidence="1">
    <location>
        <begin position="343"/>
        <end position="358"/>
    </location>
</feature>
<feature type="compositionally biased region" description="Basic and acidic residues" evidence="1">
    <location>
        <begin position="371"/>
        <end position="380"/>
    </location>
</feature>
<feature type="modified residue" description="Phosphoserine" evidence="3">
    <location>
        <position position="295"/>
    </location>
</feature>
<feature type="sequence variant" description="In allele A22.">
    <original>P</original>
    <variation>S</variation>
    <location>
        <position position="171"/>
    </location>
</feature>
<feature type="sequence variant" description="In allele A206.">
    <original>S</original>
    <variation>L</variation>
    <location>
        <position position="261"/>
    </location>
</feature>
<feature type="mutagenesis site" description="In Ala5: Induces apoptosis; when associated with A-148, A-180, A-228 and A-251." evidence="4">
    <original>S</original>
    <variation>A</variation>
    <location>
        <position position="121"/>
    </location>
</feature>
<feature type="mutagenesis site" description="In Ala5: Induces apoptosis; when associated with A-121, A-180, A-228 and A-251." evidence="4">
    <original>T</original>
    <variation>A</variation>
    <location>
        <position position="148"/>
    </location>
</feature>
<feature type="mutagenesis site" description="In Ala5: Induces apoptosis; when associated with A-121, A-148, A-228 and A-251." evidence="4">
    <original>T</original>
    <variation>A</variation>
    <location>
        <position position="180"/>
    </location>
</feature>
<feature type="mutagenesis site" description="In Ala5: Induces apoptosis; when associated with A-121, A-148, A-180 and A-251." evidence="4">
    <original>T</original>
    <variation>A</variation>
    <location>
        <position position="228"/>
    </location>
</feature>
<feature type="mutagenesis site" description="In Ala5: Induces apoptosis; when associated with A-121, A-148, A-180 and A-228." evidence="4">
    <original>S</original>
    <variation>A</variation>
    <location>
        <position position="251"/>
    </location>
</feature>
<feature type="sequence conflict" description="In Ref. 1; AAA79985." evidence="8" ref="1">
    <original>P</original>
    <variation>S</variation>
    <location>
        <position position="351"/>
    </location>
</feature>
<feature type="strand" evidence="10">
    <location>
        <begin position="3"/>
        <end position="6"/>
    </location>
</feature>
<sequence>MAVPFYLPEGGADDVASSSSGASGNSSPHNHPLPSSASSSVSSSGVSSASASSASSSSSASSDGASSAASQSPNTTTSSATQTPMQSPLPTDQVLYALYEWVRMYQSQQSAPQIFQYPPPSPSCNFTGGDVFFPHGHPNPNSNPHPRTPRTSVSFSSGEEYNFFRQQQPQPHPSYPAPSTPQPMPPQSAPPMHCSHSYPQQSAHMMPHHSAPFGMGGTYYAGYTPPPTPNTASAGTSSSSAAFGWHGHPHSPFTSTSTPLSAPVAPKMRLQRSQSDAARRKRLTSTGEDEREYQSDHEATWDEFGDRYDNFTAGRERLQEFNGRIPPRKKKSSNSHSSSSNNPVCHTDSQPGGTSQAESGAIHGHISQQRQVERERQKAKAEKKKPQSFTWPTVVTVFVLAMGCGFFAAR</sequence>
<name>HID_DROME</name>
<keyword id="KW-0002">3D-structure</keyword>
<keyword id="KW-0053">Apoptosis</keyword>
<keyword id="KW-0217">Developmental protein</keyword>
<keyword id="KW-0597">Phosphoprotein</keyword>
<keyword id="KW-1185">Reference proteome</keyword>
<evidence type="ECO:0000256" key="1">
    <source>
        <dbReference type="SAM" id="MobiDB-lite"/>
    </source>
</evidence>
<evidence type="ECO:0000269" key="2">
    <source>
    </source>
</evidence>
<evidence type="ECO:0000269" key="3">
    <source>
    </source>
</evidence>
<evidence type="ECO:0000269" key="4">
    <source>
    </source>
</evidence>
<evidence type="ECO:0000269" key="5">
    <source>
    </source>
</evidence>
<evidence type="ECO:0000269" key="6">
    <source>
    </source>
</evidence>
<evidence type="ECO:0000269" key="7">
    <source>
    </source>
</evidence>
<evidence type="ECO:0000305" key="8"/>
<evidence type="ECO:0007744" key="9">
    <source>
        <dbReference type="PDB" id="1JD6"/>
    </source>
</evidence>
<evidence type="ECO:0007829" key="10">
    <source>
        <dbReference type="PDB" id="1JD6"/>
    </source>
</evidence>
<comment type="function">
    <text evidence="2 4 5 6 7">Activator of apoptosis, with grim and rpr, that acts on the effector Dredd (PubMed:22615583, PubMed:9740659). Seems to act genetically upstream of baculoviral anti-apoptotic p35 (PubMed:7622034). Blocks Diap2 from binding and inactivating the effector caspase Drice (PubMed:18166655). Might regulate apoptosis downstream of Clbn/NEMF (PubMed:22964637).</text>
</comment>
<comment type="subunit">
    <text evidence="2">Interacts with Diap2 (via BIR2 and BIR3 domains).</text>
</comment>
<comment type="interaction">
    <interactant intactId="EBI-135509">
        <id>Q24106</id>
    </interactant>
    <interactant intactId="EBI-456419">
        <id>Q24306</id>
        <label>Diap1</label>
    </interactant>
    <organismsDiffer>false</organismsDiffer>
    <experiments>8</experiments>
</comment>
<comment type="interaction">
    <interactant intactId="EBI-135509">
        <id>Q24106</id>
    </interactant>
    <interactant intactId="EBI-112046">
        <id>Q24307</id>
        <label>Diap2</label>
    </interactant>
    <organismsDiffer>false</organismsDiffer>
    <experiments>3</experiments>
</comment>
<comment type="developmental stage">
    <text evidence="6">Expression coincides with the onset of programmed cell death (PCD) at all stages of embryonic development, particularly in the head.</text>
</comment>
<comment type="disruption phenotype">
    <text evidence="5 6">Mutants contain extra cells in the head owing to decreased levels of cell death and show a pronounced defect in the morphogenetic movements of head involution (PubMed:7622034). Ectopic expression in the retina results in complete eye ablation (PubMed:7622034). Reduces levels of caspace-3 after exposure to ionizing radiation (PubMed:22964637). Simultaneous knockout of hid and Clbn/NEMF has a similar response to single mutants after exposure to ionizing radiation (PubMed:22964637).</text>
</comment>
<comment type="similarity">
    <text evidence="8">To D.melanogaster grim and rpr.</text>
</comment>
<organism>
    <name type="scientific">Drosophila melanogaster</name>
    <name type="common">Fruit fly</name>
    <dbReference type="NCBI Taxonomy" id="7227"/>
    <lineage>
        <taxon>Eukaryota</taxon>
        <taxon>Metazoa</taxon>
        <taxon>Ecdysozoa</taxon>
        <taxon>Arthropoda</taxon>
        <taxon>Hexapoda</taxon>
        <taxon>Insecta</taxon>
        <taxon>Pterygota</taxon>
        <taxon>Neoptera</taxon>
        <taxon>Endopterygota</taxon>
        <taxon>Diptera</taxon>
        <taxon>Brachycera</taxon>
        <taxon>Muscomorpha</taxon>
        <taxon>Ephydroidea</taxon>
        <taxon>Drosophilidae</taxon>
        <taxon>Drosophila</taxon>
        <taxon>Sophophora</taxon>
    </lineage>
</organism>
<dbReference type="EMBL" id="U31226">
    <property type="protein sequence ID" value="AAA79985.1"/>
    <property type="molecule type" value="mRNA"/>
</dbReference>
<dbReference type="EMBL" id="AE014296">
    <property type="protein sequence ID" value="AAF49270.1"/>
    <property type="molecule type" value="Genomic_DNA"/>
</dbReference>
<dbReference type="EMBL" id="AY075188">
    <property type="protein sequence ID" value="AAL68057.1"/>
    <property type="molecule type" value="mRNA"/>
</dbReference>
<dbReference type="RefSeq" id="NP_001262010.1">
    <property type="nucleotide sequence ID" value="NM_001275081.1"/>
</dbReference>
<dbReference type="RefSeq" id="NP_524136.2">
    <property type="nucleotide sequence ID" value="NM_079412.4"/>
</dbReference>
<dbReference type="PDB" id="1JD6">
    <property type="method" value="X-ray"/>
    <property type="resolution" value="2.70 A"/>
    <property type="chains" value="B=2-11"/>
</dbReference>
<dbReference type="PDBsum" id="1JD6"/>
<dbReference type="SMR" id="Q24106"/>
<dbReference type="BioGRID" id="65293">
    <property type="interactions" value="113"/>
</dbReference>
<dbReference type="DIP" id="DIP-20052N"/>
<dbReference type="ELM" id="Q24106"/>
<dbReference type="FunCoup" id="Q24106">
    <property type="interactions" value="107"/>
</dbReference>
<dbReference type="IntAct" id="Q24106">
    <property type="interactions" value="9"/>
</dbReference>
<dbReference type="STRING" id="7227.FBpp0074899"/>
<dbReference type="GlyGen" id="Q24106">
    <property type="glycosylation" value="1 site"/>
</dbReference>
<dbReference type="iPTMnet" id="Q24106"/>
<dbReference type="PaxDb" id="7227-FBpp0074899"/>
<dbReference type="DNASU" id="40009"/>
<dbReference type="EnsemblMetazoa" id="FBtr0075133">
    <property type="protein sequence ID" value="FBpp0074899"/>
    <property type="gene ID" value="FBgn0003997"/>
</dbReference>
<dbReference type="EnsemblMetazoa" id="FBtr0332862">
    <property type="protein sequence ID" value="FBpp0305084"/>
    <property type="gene ID" value="FBgn0003997"/>
</dbReference>
<dbReference type="GeneID" id="40009"/>
<dbReference type="KEGG" id="dme:Dmel_CG5123"/>
<dbReference type="AGR" id="FB:FBgn0003997"/>
<dbReference type="CTD" id="40009"/>
<dbReference type="FlyBase" id="FBgn0003997">
    <property type="gene designation" value="hid"/>
</dbReference>
<dbReference type="VEuPathDB" id="VectorBase:FBgn0003997"/>
<dbReference type="eggNOG" id="ENOG502TBS2">
    <property type="taxonomic scope" value="Eukaryota"/>
</dbReference>
<dbReference type="HOGENOM" id="CLU_671335_0_0_1"/>
<dbReference type="InParanoid" id="Q24106"/>
<dbReference type="OMA" id="SAPPMHY"/>
<dbReference type="OrthoDB" id="7883603at2759"/>
<dbReference type="PhylomeDB" id="Q24106"/>
<dbReference type="SignaLink" id="Q24106"/>
<dbReference type="BioGRID-ORCS" id="40009">
    <property type="hits" value="0 hits in 1 CRISPR screen"/>
</dbReference>
<dbReference type="ChiTaRS" id="w">
    <property type="organism name" value="fly"/>
</dbReference>
<dbReference type="EvolutionaryTrace" id="Q24106"/>
<dbReference type="GenomeRNAi" id="40009"/>
<dbReference type="PRO" id="PR:Q24106"/>
<dbReference type="Proteomes" id="UP000000803">
    <property type="component" value="Chromosome 3L"/>
</dbReference>
<dbReference type="Bgee" id="FBgn0003997">
    <property type="expression patterns" value="Expressed in hemocyte (sensu Nematoda and Protostomia) in insect leg and 217 other cell types or tissues"/>
</dbReference>
<dbReference type="ExpressionAtlas" id="Q24106">
    <property type="expression patterns" value="baseline and differential"/>
</dbReference>
<dbReference type="GO" id="GO:0005737">
    <property type="term" value="C:cytoplasm"/>
    <property type="evidence" value="ECO:0000314"/>
    <property type="project" value="FlyBase"/>
</dbReference>
<dbReference type="GO" id="GO:0005739">
    <property type="term" value="C:mitochondrion"/>
    <property type="evidence" value="ECO:0000314"/>
    <property type="project" value="FlyBase"/>
</dbReference>
<dbReference type="GO" id="GO:0005634">
    <property type="term" value="C:nucleus"/>
    <property type="evidence" value="ECO:0000314"/>
    <property type="project" value="FlyBase"/>
</dbReference>
<dbReference type="GO" id="GO:0005886">
    <property type="term" value="C:plasma membrane"/>
    <property type="evidence" value="ECO:0000314"/>
    <property type="project" value="FlyBase"/>
</dbReference>
<dbReference type="GO" id="GO:1990525">
    <property type="term" value="F:BIR domain binding"/>
    <property type="evidence" value="ECO:0000353"/>
    <property type="project" value="FlyBase"/>
</dbReference>
<dbReference type="GO" id="GO:0043028">
    <property type="term" value="F:cysteine-type endopeptidase regulator activity involved in apoptotic process"/>
    <property type="evidence" value="ECO:0000314"/>
    <property type="project" value="FlyBase"/>
</dbReference>
<dbReference type="GO" id="GO:0140311">
    <property type="term" value="F:protein sequestering activity"/>
    <property type="evidence" value="ECO:0000314"/>
    <property type="project" value="FlyBase"/>
</dbReference>
<dbReference type="GO" id="GO:0031625">
    <property type="term" value="F:ubiquitin protein ligase binding"/>
    <property type="evidence" value="ECO:0000353"/>
    <property type="project" value="FlyBase"/>
</dbReference>
<dbReference type="GO" id="GO:0048800">
    <property type="term" value="P:antennal morphogenesis"/>
    <property type="evidence" value="ECO:0000315"/>
    <property type="project" value="FlyBase"/>
</dbReference>
<dbReference type="GO" id="GO:0006915">
    <property type="term" value="P:apoptotic process"/>
    <property type="evidence" value="ECO:0000315"/>
    <property type="project" value="FlyBase"/>
</dbReference>
<dbReference type="GO" id="GO:0097190">
    <property type="term" value="P:apoptotic signaling pathway"/>
    <property type="evidence" value="ECO:0000314"/>
    <property type="project" value="FlyBase"/>
</dbReference>
<dbReference type="GO" id="GO:0048102">
    <property type="term" value="P:autophagic cell death"/>
    <property type="evidence" value="ECO:0000315"/>
    <property type="project" value="FlyBase"/>
</dbReference>
<dbReference type="GO" id="GO:0071480">
    <property type="term" value="P:cellular response to gamma radiation"/>
    <property type="evidence" value="ECO:0000315"/>
    <property type="project" value="FlyBase"/>
</dbReference>
<dbReference type="GO" id="GO:0009267">
    <property type="term" value="P:cellular response to starvation"/>
    <property type="evidence" value="ECO:0000315"/>
    <property type="project" value="FlyBase"/>
</dbReference>
<dbReference type="GO" id="GO:0048813">
    <property type="term" value="P:dendrite morphogenesis"/>
    <property type="evidence" value="ECO:0000315"/>
    <property type="project" value="FlyBase"/>
</dbReference>
<dbReference type="GO" id="GO:0043153">
    <property type="term" value="P:entrainment of circadian clock by photoperiod"/>
    <property type="evidence" value="ECO:0000315"/>
    <property type="project" value="FlyBase"/>
</dbReference>
<dbReference type="GO" id="GO:0008258">
    <property type="term" value="P:head involution"/>
    <property type="evidence" value="ECO:0000315"/>
    <property type="project" value="FlyBase"/>
</dbReference>
<dbReference type="GO" id="GO:0002165">
    <property type="term" value="P:instar larval or pupal development"/>
    <property type="evidence" value="ECO:0000315"/>
    <property type="project" value="FlyBase"/>
</dbReference>
<dbReference type="GO" id="GO:0008630">
    <property type="term" value="P:intrinsic apoptotic signaling pathway in response to DNA damage"/>
    <property type="evidence" value="ECO:0000315"/>
    <property type="project" value="FlyBase"/>
</dbReference>
<dbReference type="GO" id="GO:0035096">
    <property type="term" value="P:larval midgut cell programmed cell death"/>
    <property type="evidence" value="ECO:0000316"/>
    <property type="project" value="FlyBase"/>
</dbReference>
<dbReference type="GO" id="GO:0007424">
    <property type="term" value="P:open tracheal system development"/>
    <property type="evidence" value="ECO:0000315"/>
    <property type="project" value="FlyBase"/>
</dbReference>
<dbReference type="GO" id="GO:0043065">
    <property type="term" value="P:positive regulation of apoptotic process"/>
    <property type="evidence" value="ECO:0000314"/>
    <property type="project" value="FlyBase"/>
</dbReference>
<dbReference type="GO" id="GO:1904747">
    <property type="term" value="P:positive regulation of apoptotic process involved in development"/>
    <property type="evidence" value="ECO:0000315"/>
    <property type="project" value="UniProtKB"/>
</dbReference>
<dbReference type="GO" id="GO:2000685">
    <property type="term" value="P:positive regulation of cellular response to X-ray"/>
    <property type="evidence" value="ECO:0000315"/>
    <property type="project" value="FlyBase"/>
</dbReference>
<dbReference type="GO" id="GO:0016239">
    <property type="term" value="P:positive regulation of macroautophagy"/>
    <property type="evidence" value="ECO:0000315"/>
    <property type="project" value="FlyBase"/>
</dbReference>
<dbReference type="GO" id="GO:0012501">
    <property type="term" value="P:programmed cell death"/>
    <property type="evidence" value="ECO:0000315"/>
    <property type="project" value="FlyBase"/>
</dbReference>
<dbReference type="GO" id="GO:0046620">
    <property type="term" value="P:regulation of organ growth"/>
    <property type="evidence" value="ECO:0000315"/>
    <property type="project" value="FlyBase"/>
</dbReference>
<dbReference type="GO" id="GO:0035075">
    <property type="term" value="P:response to ecdysone"/>
    <property type="evidence" value="ECO:0000315"/>
    <property type="project" value="FlyBase"/>
</dbReference>
<dbReference type="GO" id="GO:0010114">
    <property type="term" value="P:response to red light"/>
    <property type="evidence" value="ECO:0000315"/>
    <property type="project" value="FlyBase"/>
</dbReference>
<dbReference type="GO" id="GO:0007548">
    <property type="term" value="P:sex differentiation"/>
    <property type="evidence" value="ECO:0000315"/>
    <property type="project" value="FlyBase"/>
</dbReference>
<proteinExistence type="evidence at protein level"/>
<gene>
    <name type="primary">hid</name>
    <name type="synonym">W</name>
    <name type="ORF">CG5123</name>
</gene>
<reference key="1">
    <citation type="journal article" date="1995" name="Genes Dev.">
        <title>The head involution defective gene of Drosophila melanogaster functions in programmed cell death.</title>
        <authorList>
            <person name="Grether M.E."/>
            <person name="Abrams J.M."/>
            <person name="Agapite J."/>
            <person name="White K."/>
            <person name="Steller H."/>
        </authorList>
    </citation>
    <scope>NUCLEOTIDE SEQUENCE [MRNA]</scope>
    <scope>FUNCTION</scope>
    <scope>DEVELOPMENTAL STAGE</scope>
    <scope>DISRUPTION PHENOTYPE</scope>
    <source>
        <strain>Canton-S</strain>
        <tissue>Eye imaginal disk</tissue>
    </source>
</reference>
<reference key="2">
    <citation type="journal article" date="2000" name="Science">
        <title>The genome sequence of Drosophila melanogaster.</title>
        <authorList>
            <person name="Adams M.D."/>
            <person name="Celniker S.E."/>
            <person name="Holt R.A."/>
            <person name="Evans C.A."/>
            <person name="Gocayne J.D."/>
            <person name="Amanatides P.G."/>
            <person name="Scherer S.E."/>
            <person name="Li P.W."/>
            <person name="Hoskins R.A."/>
            <person name="Galle R.F."/>
            <person name="George R.A."/>
            <person name="Lewis S.E."/>
            <person name="Richards S."/>
            <person name="Ashburner M."/>
            <person name="Henderson S.N."/>
            <person name="Sutton G.G."/>
            <person name="Wortman J.R."/>
            <person name="Yandell M.D."/>
            <person name="Zhang Q."/>
            <person name="Chen L.X."/>
            <person name="Brandon R.C."/>
            <person name="Rogers Y.-H.C."/>
            <person name="Blazej R.G."/>
            <person name="Champe M."/>
            <person name="Pfeiffer B.D."/>
            <person name="Wan K.H."/>
            <person name="Doyle C."/>
            <person name="Baxter E.G."/>
            <person name="Helt G."/>
            <person name="Nelson C.R."/>
            <person name="Miklos G.L.G."/>
            <person name="Abril J.F."/>
            <person name="Agbayani A."/>
            <person name="An H.-J."/>
            <person name="Andrews-Pfannkoch C."/>
            <person name="Baldwin D."/>
            <person name="Ballew R.M."/>
            <person name="Basu A."/>
            <person name="Baxendale J."/>
            <person name="Bayraktaroglu L."/>
            <person name="Beasley E.M."/>
            <person name="Beeson K.Y."/>
            <person name="Benos P.V."/>
            <person name="Berman B.P."/>
            <person name="Bhandari D."/>
            <person name="Bolshakov S."/>
            <person name="Borkova D."/>
            <person name="Botchan M.R."/>
            <person name="Bouck J."/>
            <person name="Brokstein P."/>
            <person name="Brottier P."/>
            <person name="Burtis K.C."/>
            <person name="Busam D.A."/>
            <person name="Butler H."/>
            <person name="Cadieu E."/>
            <person name="Center A."/>
            <person name="Chandra I."/>
            <person name="Cherry J.M."/>
            <person name="Cawley S."/>
            <person name="Dahlke C."/>
            <person name="Davenport L.B."/>
            <person name="Davies P."/>
            <person name="de Pablos B."/>
            <person name="Delcher A."/>
            <person name="Deng Z."/>
            <person name="Mays A.D."/>
            <person name="Dew I."/>
            <person name="Dietz S.M."/>
            <person name="Dodson K."/>
            <person name="Doup L.E."/>
            <person name="Downes M."/>
            <person name="Dugan-Rocha S."/>
            <person name="Dunkov B.C."/>
            <person name="Dunn P."/>
            <person name="Durbin K.J."/>
            <person name="Evangelista C.C."/>
            <person name="Ferraz C."/>
            <person name="Ferriera S."/>
            <person name="Fleischmann W."/>
            <person name="Fosler C."/>
            <person name="Gabrielian A.E."/>
            <person name="Garg N.S."/>
            <person name="Gelbart W.M."/>
            <person name="Glasser K."/>
            <person name="Glodek A."/>
            <person name="Gong F."/>
            <person name="Gorrell J.H."/>
            <person name="Gu Z."/>
            <person name="Guan P."/>
            <person name="Harris M."/>
            <person name="Harris N.L."/>
            <person name="Harvey D.A."/>
            <person name="Heiman T.J."/>
            <person name="Hernandez J.R."/>
            <person name="Houck J."/>
            <person name="Hostin D."/>
            <person name="Houston K.A."/>
            <person name="Howland T.J."/>
            <person name="Wei M.-H."/>
            <person name="Ibegwam C."/>
            <person name="Jalali M."/>
            <person name="Kalush F."/>
            <person name="Karpen G.H."/>
            <person name="Ke Z."/>
            <person name="Kennison J.A."/>
            <person name="Ketchum K.A."/>
            <person name="Kimmel B.E."/>
            <person name="Kodira C.D."/>
            <person name="Kraft C.L."/>
            <person name="Kravitz S."/>
            <person name="Kulp D."/>
            <person name="Lai Z."/>
            <person name="Lasko P."/>
            <person name="Lei Y."/>
            <person name="Levitsky A.A."/>
            <person name="Li J.H."/>
            <person name="Li Z."/>
            <person name="Liang Y."/>
            <person name="Lin X."/>
            <person name="Liu X."/>
            <person name="Mattei B."/>
            <person name="McIntosh T.C."/>
            <person name="McLeod M.P."/>
            <person name="McPherson D."/>
            <person name="Merkulov G."/>
            <person name="Milshina N.V."/>
            <person name="Mobarry C."/>
            <person name="Morris J."/>
            <person name="Moshrefi A."/>
            <person name="Mount S.M."/>
            <person name="Moy M."/>
            <person name="Murphy B."/>
            <person name="Murphy L."/>
            <person name="Muzny D.M."/>
            <person name="Nelson D.L."/>
            <person name="Nelson D.R."/>
            <person name="Nelson K.A."/>
            <person name="Nixon K."/>
            <person name="Nusskern D.R."/>
            <person name="Pacleb J.M."/>
            <person name="Palazzolo M."/>
            <person name="Pittman G.S."/>
            <person name="Pan S."/>
            <person name="Pollard J."/>
            <person name="Puri V."/>
            <person name="Reese M.G."/>
            <person name="Reinert K."/>
            <person name="Remington K."/>
            <person name="Saunders R.D.C."/>
            <person name="Scheeler F."/>
            <person name="Shen H."/>
            <person name="Shue B.C."/>
            <person name="Siden-Kiamos I."/>
            <person name="Simpson M."/>
            <person name="Skupski M.P."/>
            <person name="Smith T.J."/>
            <person name="Spier E."/>
            <person name="Spradling A.C."/>
            <person name="Stapleton M."/>
            <person name="Strong R."/>
            <person name="Sun E."/>
            <person name="Svirskas R."/>
            <person name="Tector C."/>
            <person name="Turner R."/>
            <person name="Venter E."/>
            <person name="Wang A.H."/>
            <person name="Wang X."/>
            <person name="Wang Z.-Y."/>
            <person name="Wassarman D.A."/>
            <person name="Weinstock G.M."/>
            <person name="Weissenbach J."/>
            <person name="Williams S.M."/>
            <person name="Woodage T."/>
            <person name="Worley K.C."/>
            <person name="Wu D."/>
            <person name="Yang S."/>
            <person name="Yao Q.A."/>
            <person name="Ye J."/>
            <person name="Yeh R.-F."/>
            <person name="Zaveri J.S."/>
            <person name="Zhan M."/>
            <person name="Zhang G."/>
            <person name="Zhao Q."/>
            <person name="Zheng L."/>
            <person name="Zheng X.H."/>
            <person name="Zhong F.N."/>
            <person name="Zhong W."/>
            <person name="Zhou X."/>
            <person name="Zhu S.C."/>
            <person name="Zhu X."/>
            <person name="Smith H.O."/>
            <person name="Gibbs R.A."/>
            <person name="Myers E.W."/>
            <person name="Rubin G.M."/>
            <person name="Venter J.C."/>
        </authorList>
    </citation>
    <scope>NUCLEOTIDE SEQUENCE [LARGE SCALE GENOMIC DNA]</scope>
    <source>
        <strain>Berkeley</strain>
    </source>
</reference>
<reference key="3">
    <citation type="journal article" date="2002" name="Genome Biol.">
        <title>Annotation of the Drosophila melanogaster euchromatic genome: a systematic review.</title>
        <authorList>
            <person name="Misra S."/>
            <person name="Crosby M.A."/>
            <person name="Mungall C.J."/>
            <person name="Matthews B.B."/>
            <person name="Campbell K.S."/>
            <person name="Hradecky P."/>
            <person name="Huang Y."/>
            <person name="Kaminker J.S."/>
            <person name="Millburn G.H."/>
            <person name="Prochnik S.E."/>
            <person name="Smith C.D."/>
            <person name="Tupy J.L."/>
            <person name="Whitfield E.J."/>
            <person name="Bayraktaroglu L."/>
            <person name="Berman B.P."/>
            <person name="Bettencourt B.R."/>
            <person name="Celniker S.E."/>
            <person name="de Grey A.D.N.J."/>
            <person name="Drysdale R.A."/>
            <person name="Harris N.L."/>
            <person name="Richter J."/>
            <person name="Russo S."/>
            <person name="Schroeder A.J."/>
            <person name="Shu S.Q."/>
            <person name="Stapleton M."/>
            <person name="Yamada C."/>
            <person name="Ashburner M."/>
            <person name="Gelbart W.M."/>
            <person name="Rubin G.M."/>
            <person name="Lewis S.E."/>
        </authorList>
    </citation>
    <scope>GENOME REANNOTATION</scope>
    <source>
        <strain>Berkeley</strain>
    </source>
</reference>
<reference key="4">
    <citation type="journal article" date="2002" name="Genome Biol.">
        <title>A Drosophila full-length cDNA resource.</title>
        <authorList>
            <person name="Stapleton M."/>
            <person name="Carlson J.W."/>
            <person name="Brokstein P."/>
            <person name="Yu C."/>
            <person name="Champe M."/>
            <person name="George R.A."/>
            <person name="Guarin H."/>
            <person name="Kronmiller B."/>
            <person name="Pacleb J.M."/>
            <person name="Park S."/>
            <person name="Wan K.H."/>
            <person name="Rubin G.M."/>
            <person name="Celniker S.E."/>
        </authorList>
    </citation>
    <scope>NUCLEOTIDE SEQUENCE [LARGE SCALE MRNA]</scope>
    <source>
        <strain>Berkeley</strain>
        <tissue>Testis</tissue>
    </source>
</reference>
<reference key="5">
    <citation type="journal article" date="1998" name="Dev. Biol.">
        <title>Dredd, a novel effector of the apoptosis activators reaper, grim, and hid in Drosophila.</title>
        <authorList>
            <person name="Chen P."/>
            <person name="Rodriguez A."/>
            <person name="Erskine R."/>
            <person name="Thach T."/>
            <person name="Abrams J.M."/>
        </authorList>
    </citation>
    <scope>FUNCTION</scope>
    <source>
        <tissue>Embryo</tissue>
    </source>
</reference>
<reference key="6">
    <citation type="journal article" date="2007" name="J. Cell Biol.">
        <title>DIAP2 functions as a mechanism-based regulator of drICE that contributes to the caspase activity threshold in living cells.</title>
        <authorList>
            <person name="Ribeiro P.S."/>
            <person name="Kuranaga E."/>
            <person name="Tenev T."/>
            <person name="Leulier F."/>
            <person name="Miura M."/>
            <person name="Meier P."/>
        </authorList>
    </citation>
    <scope>FUNCTION</scope>
    <scope>INTERACTION WITH DIAP2</scope>
</reference>
<reference key="7">
    <citation type="journal article" date="2008" name="J. Proteome Res.">
        <title>Phosphoproteome analysis of Drosophila melanogaster embryos.</title>
        <authorList>
            <person name="Zhai B."/>
            <person name="Villen J."/>
            <person name="Beausoleil S.A."/>
            <person name="Mintseris J."/>
            <person name="Gygi S.P."/>
        </authorList>
    </citation>
    <scope>PHOSPHORYLATION [LARGE SCALE ANALYSIS] AT SER-295</scope>
    <scope>IDENTIFICATION BY MASS SPECTROMETRY</scope>
    <source>
        <tissue>Embryo</tissue>
    </source>
</reference>
<reference key="8">
    <citation type="journal article" date="2012" name="PLoS Genet.">
        <title>Drosophila activated Cdc42 kinase has an anti-apoptotic function.</title>
        <authorList>
            <person name="Schoenherr J.A."/>
            <person name="Drennan J.M."/>
            <person name="Martinez J.S."/>
            <person name="Chikka M.R."/>
            <person name="Hall M.C."/>
            <person name="Chang H.C."/>
            <person name="Clemens J.C."/>
        </authorList>
    </citation>
    <scope>FUNCTION</scope>
    <scope>MUTAGENESIS OF SER-121; THR-148; THR-180; THR-228 AND SER-251</scope>
</reference>
<reference key="9">
    <citation type="journal article" date="2013" name="Oncogene">
        <title>The tumor suppressor Caliban regulates DNA damage-induced apoptosis through p53-dependent and -independent activity.</title>
        <authorList>
            <person name="Wang Y."/>
            <person name="Wang Z."/>
            <person name="Joshi B.H."/>
            <person name="Puri R.K."/>
            <person name="Stultz B."/>
            <person name="Yuan Q."/>
            <person name="Bai Y."/>
            <person name="Zhou P."/>
            <person name="Yuan Z."/>
            <person name="Hursh D.A."/>
            <person name="Bi X."/>
        </authorList>
    </citation>
    <scope>FUNCTION</scope>
    <scope>DISRUPTION PHENOTYPE</scope>
</reference>
<reference evidence="9" key="10">
    <citation type="journal article" date="2001" name="Mol. Cell">
        <title>Structural analysis of a functional DIAP1 fragment bound to grim and hid peptides.</title>
        <authorList>
            <person name="Wu J.W."/>
            <person name="Cocina A.E."/>
            <person name="Chai J."/>
            <person name="Hay B.A."/>
            <person name="Shi Y."/>
        </authorList>
    </citation>
    <scope>X-RAY CRYSTALLOGRAPHY (2.70 ANGSTROMS) OF 2-11</scope>
</reference>
<accession>Q24106</accession>
<accession>Q9VVP1</accession>